<comment type="function">
    <text evidence="1">G-protein coupled receptor for glutamate. Ligand binding causes a conformation change that triggers signaling via guanine nucleotide-binding proteins (G proteins) and modulates the activity of down-stream effectors. Signaling inhibits adenylate cyclase activity (By similarity).</text>
</comment>
<comment type="subunit">
    <text evidence="1">Interacts with TAMALIN.</text>
</comment>
<comment type="subcellular location">
    <subcellularLocation>
        <location evidence="1">Cell membrane</location>
        <topology evidence="1">Multi-pass membrane protein</topology>
    </subcellularLocation>
</comment>
<comment type="similarity">
    <text evidence="3">Belongs to the G-protein coupled receptor 3 family.</text>
</comment>
<dbReference type="EMBL" id="CR859002">
    <property type="protein sequence ID" value="CAH91197.1"/>
    <property type="molecule type" value="mRNA"/>
</dbReference>
<dbReference type="RefSeq" id="NP_001125703.1">
    <property type="nucleotide sequence ID" value="NM_001132231.1"/>
</dbReference>
<dbReference type="SMR" id="Q5RAL3"/>
<dbReference type="FunCoup" id="Q5RAL3">
    <property type="interactions" value="998"/>
</dbReference>
<dbReference type="STRING" id="9601.ENSPPYP00000020006"/>
<dbReference type="GlyCosmos" id="Q5RAL3">
    <property type="glycosylation" value="4 sites, No reported glycans"/>
</dbReference>
<dbReference type="GeneID" id="100172627"/>
<dbReference type="KEGG" id="pon:100172627"/>
<dbReference type="CTD" id="2913"/>
<dbReference type="eggNOG" id="KOG1056">
    <property type="taxonomic scope" value="Eukaryota"/>
</dbReference>
<dbReference type="InParanoid" id="Q5RAL3"/>
<dbReference type="OrthoDB" id="425344at2759"/>
<dbReference type="Proteomes" id="UP000001595">
    <property type="component" value="Unplaced"/>
</dbReference>
<dbReference type="GO" id="GO:0005886">
    <property type="term" value="C:plasma membrane"/>
    <property type="evidence" value="ECO:0007669"/>
    <property type="project" value="UniProtKB-SubCell"/>
</dbReference>
<dbReference type="GO" id="GO:0004930">
    <property type="term" value="F:G protein-coupled receptor activity"/>
    <property type="evidence" value="ECO:0007669"/>
    <property type="project" value="UniProtKB-KW"/>
</dbReference>
<dbReference type="GO" id="GO:0008066">
    <property type="term" value="F:glutamate receptor activity"/>
    <property type="evidence" value="ECO:0007669"/>
    <property type="project" value="UniProtKB-ARBA"/>
</dbReference>
<dbReference type="CDD" id="cd15448">
    <property type="entry name" value="7tmC_mGluR3"/>
    <property type="match status" value="1"/>
</dbReference>
<dbReference type="CDD" id="cd06375">
    <property type="entry name" value="PBP1_mGluR_groupII"/>
    <property type="match status" value="1"/>
</dbReference>
<dbReference type="FunFam" id="2.10.50.30:FF:000001">
    <property type="entry name" value="metabotropic glutamate receptor 1"/>
    <property type="match status" value="1"/>
</dbReference>
<dbReference type="FunFam" id="3.40.50.2300:FF:000029">
    <property type="entry name" value="Metabotropic glutamate receptor 3"/>
    <property type="match status" value="1"/>
</dbReference>
<dbReference type="Gene3D" id="3.40.50.2300">
    <property type="match status" value="2"/>
</dbReference>
<dbReference type="Gene3D" id="2.10.50.30">
    <property type="entry name" value="GPCR, family 3, nine cysteines domain"/>
    <property type="match status" value="1"/>
</dbReference>
<dbReference type="InterPro" id="IPR001828">
    <property type="entry name" value="ANF_lig-bd_rcpt"/>
</dbReference>
<dbReference type="InterPro" id="IPR000337">
    <property type="entry name" value="GPCR_3"/>
</dbReference>
<dbReference type="InterPro" id="IPR011500">
    <property type="entry name" value="GPCR_3_9-Cys_dom"/>
</dbReference>
<dbReference type="InterPro" id="IPR038550">
    <property type="entry name" value="GPCR_3_9-Cys_sf"/>
</dbReference>
<dbReference type="InterPro" id="IPR017978">
    <property type="entry name" value="GPCR_3_C"/>
</dbReference>
<dbReference type="InterPro" id="IPR017979">
    <property type="entry name" value="GPCR_3_CS"/>
</dbReference>
<dbReference type="InterPro" id="IPR001234">
    <property type="entry name" value="GPCR_3_mGluR3"/>
</dbReference>
<dbReference type="InterPro" id="IPR000162">
    <property type="entry name" value="GPCR_3_mtglu_rcpt"/>
</dbReference>
<dbReference type="InterPro" id="IPR050726">
    <property type="entry name" value="mGluR"/>
</dbReference>
<dbReference type="InterPro" id="IPR028082">
    <property type="entry name" value="Peripla_BP_I"/>
</dbReference>
<dbReference type="PANTHER" id="PTHR24060">
    <property type="entry name" value="METABOTROPIC GLUTAMATE RECEPTOR"/>
    <property type="match status" value="1"/>
</dbReference>
<dbReference type="Pfam" id="PF00003">
    <property type="entry name" value="7tm_3"/>
    <property type="match status" value="1"/>
</dbReference>
<dbReference type="Pfam" id="PF01094">
    <property type="entry name" value="ANF_receptor"/>
    <property type="match status" value="1"/>
</dbReference>
<dbReference type="Pfam" id="PF07562">
    <property type="entry name" value="NCD3G"/>
    <property type="match status" value="1"/>
</dbReference>
<dbReference type="PRINTS" id="PR00248">
    <property type="entry name" value="GPCRMGR"/>
</dbReference>
<dbReference type="PRINTS" id="PR01053">
    <property type="entry name" value="MTABOTROPC3R"/>
</dbReference>
<dbReference type="PRINTS" id="PR00593">
    <property type="entry name" value="MTABOTROPICR"/>
</dbReference>
<dbReference type="SUPFAM" id="SSF53822">
    <property type="entry name" value="Periplasmic binding protein-like I"/>
    <property type="match status" value="1"/>
</dbReference>
<dbReference type="PROSITE" id="PS00979">
    <property type="entry name" value="G_PROTEIN_RECEP_F3_1"/>
    <property type="match status" value="1"/>
</dbReference>
<dbReference type="PROSITE" id="PS00980">
    <property type="entry name" value="G_PROTEIN_RECEP_F3_2"/>
    <property type="match status" value="1"/>
</dbReference>
<dbReference type="PROSITE" id="PS00981">
    <property type="entry name" value="G_PROTEIN_RECEP_F3_3"/>
    <property type="match status" value="1"/>
</dbReference>
<dbReference type="PROSITE" id="PS50259">
    <property type="entry name" value="G_PROTEIN_RECEP_F3_4"/>
    <property type="match status" value="1"/>
</dbReference>
<name>GRM3_PONAB</name>
<sequence>MKMLTRLQVLTLALFSKGFLLSLGDHNFLRREIKIEGDLVLGGLFPINEKGTGTEECGRINEDRGIQRLEAMLFAIDEINKDDYLLPGVELGVHILDTCSRDTYALEQSLEFVRASLTKVDEAEYMCPDGSYAIQENIPLLIAGVIGGSYSSVSIQVANLLRLFQIPQISYASTSAKLSDKSRYDYFARTVPPDFYQAKAMAEILRFFNWTYVSTVASEGDYGETGIEAFEQEARLRNICIATAEKVGRSNIRKSYDSVIRELLQKPNARVVVLFMRSDDSRELIAAASRANASFTWVASDGWGAQESIIKGSEHVAYGAITLELASQPVRQFDRYFQSLNPYNNHRNPWFRDFWEQKFQCSLQNKRNHRRVCDKHLAIDSSNYEQESKIMFVVNAVYAMAHALHKMQRTLCPNTTKLCDAMRILDGKKLYRDYLLKINFTAPFNPNKDADSIVKFDTFGDGMGRYNVFNFQNVGGKYSYLKVGHWAETLSLDVDSIHWSRNSVPTSQCSDPCAPNEMKNMQPGDVCCWICIPCEPYEYLADEFTCMDCGPGQWPTADLTGCYDLPEDYIRWEDAWVIGPVTIACLGFMCTCMVVTVFIKHNNTPLVKASGRELCYILLFGVGLSYCMTFFFIAKPSPVICALRRLGLGSSFAICYSALLTKTNCIARIFDGVKNGAQRPKFISPSSQVFICLGLILVQIVMVSVWLILEAPGTRRYTLAEKRETVILKCNVKDSSMLISLTYDVILVILCTVYAFKTRKCPENFNEAKFIGFTMYTTCIIWLAFLPIFYVTSSDYRVQTTTMCISVSLSGFVVLGCLFAPKVHIILFQPQKNVVTHRLHLNRFSVSGTGTTYSQSSASTYVPTVCNGREVLDSTTSSL</sequence>
<protein>
    <recommendedName>
        <fullName>Metabotropic glutamate receptor 3</fullName>
        <shortName>mGluR3</shortName>
    </recommendedName>
</protein>
<accession>Q5RAL3</accession>
<reference key="1">
    <citation type="submission" date="2004-11" db="EMBL/GenBank/DDBJ databases">
        <authorList>
            <consortium name="The German cDNA consortium"/>
        </authorList>
    </citation>
    <scope>NUCLEOTIDE SEQUENCE [LARGE SCALE MRNA]</scope>
    <source>
        <tissue>Brain cortex</tissue>
    </source>
</reference>
<evidence type="ECO:0000250" key="1"/>
<evidence type="ECO:0000255" key="2"/>
<evidence type="ECO:0000305" key="3"/>
<gene>
    <name type="primary">GRM3</name>
</gene>
<feature type="signal peptide" evidence="2">
    <location>
        <begin position="1"/>
        <end position="22"/>
    </location>
</feature>
<feature type="chain" id="PRO_0000042105" description="Metabotropic glutamate receptor 3">
    <location>
        <begin position="23"/>
        <end position="879"/>
    </location>
</feature>
<feature type="topological domain" description="Extracellular" evidence="2">
    <location>
        <begin position="23"/>
        <end position="576"/>
    </location>
</feature>
<feature type="transmembrane region" description="Helical; Name=1" evidence="2">
    <location>
        <begin position="577"/>
        <end position="599"/>
    </location>
</feature>
<feature type="topological domain" description="Cytoplasmic" evidence="2">
    <location>
        <begin position="600"/>
        <end position="613"/>
    </location>
</feature>
<feature type="transmembrane region" description="Helical; Name=2" evidence="2">
    <location>
        <begin position="614"/>
        <end position="634"/>
    </location>
</feature>
<feature type="topological domain" description="Extracellular" evidence="2">
    <location>
        <begin position="635"/>
        <end position="645"/>
    </location>
</feature>
<feature type="transmembrane region" description="Helical; Name=3" evidence="2">
    <location>
        <begin position="646"/>
        <end position="664"/>
    </location>
</feature>
<feature type="topological domain" description="Cytoplasmic" evidence="2">
    <location>
        <begin position="665"/>
        <end position="688"/>
    </location>
</feature>
<feature type="transmembrane region" description="Helical; Name=4" evidence="2">
    <location>
        <begin position="689"/>
        <end position="709"/>
    </location>
</feature>
<feature type="topological domain" description="Extracellular" evidence="2">
    <location>
        <begin position="710"/>
        <end position="734"/>
    </location>
</feature>
<feature type="transmembrane region" description="Helical; Name=5" evidence="2">
    <location>
        <begin position="735"/>
        <end position="756"/>
    </location>
</feature>
<feature type="topological domain" description="Cytoplasmic" evidence="2">
    <location>
        <begin position="757"/>
        <end position="769"/>
    </location>
</feature>
<feature type="transmembrane region" description="Helical; Name=6" evidence="2">
    <location>
        <begin position="770"/>
        <end position="792"/>
    </location>
</feature>
<feature type="topological domain" description="Extracellular" evidence="2">
    <location>
        <begin position="793"/>
        <end position="802"/>
    </location>
</feature>
<feature type="transmembrane region" description="Helical; Name=7" evidence="2">
    <location>
        <begin position="803"/>
        <end position="828"/>
    </location>
</feature>
<feature type="topological domain" description="Cytoplasmic" evidence="2">
    <location>
        <begin position="829"/>
        <end position="879"/>
    </location>
</feature>
<feature type="binding site" evidence="1">
    <location>
        <position position="151"/>
    </location>
    <ligand>
        <name>L-glutamate</name>
        <dbReference type="ChEBI" id="CHEBI:29985"/>
    </ligand>
</feature>
<feature type="binding site" evidence="1">
    <location>
        <begin position="172"/>
        <end position="174"/>
    </location>
    <ligand>
        <name>L-glutamate</name>
        <dbReference type="ChEBI" id="CHEBI:29985"/>
    </ligand>
</feature>
<feature type="binding site" evidence="1">
    <location>
        <position position="222"/>
    </location>
    <ligand>
        <name>L-glutamate</name>
        <dbReference type="ChEBI" id="CHEBI:29985"/>
    </ligand>
</feature>
<feature type="binding site" evidence="1">
    <location>
        <position position="301"/>
    </location>
    <ligand>
        <name>L-glutamate</name>
        <dbReference type="ChEBI" id="CHEBI:29985"/>
    </ligand>
</feature>
<feature type="binding site" evidence="1">
    <location>
        <position position="389"/>
    </location>
    <ligand>
        <name>L-glutamate</name>
        <dbReference type="ChEBI" id="CHEBI:29985"/>
    </ligand>
</feature>
<feature type="glycosylation site" description="N-linked (GlcNAc...) asparagine" evidence="2">
    <location>
        <position position="209"/>
    </location>
</feature>
<feature type="glycosylation site" description="N-linked (GlcNAc...) asparagine" evidence="2">
    <location>
        <position position="292"/>
    </location>
</feature>
<feature type="glycosylation site" description="N-linked (GlcNAc...) asparagine" evidence="2">
    <location>
        <position position="414"/>
    </location>
</feature>
<feature type="glycosylation site" description="N-linked (GlcNAc...) asparagine" evidence="2">
    <location>
        <position position="439"/>
    </location>
</feature>
<feature type="disulfide bond" evidence="1">
    <location>
        <begin position="57"/>
        <end position="99"/>
    </location>
</feature>
<feature type="disulfide bond" evidence="1">
    <location>
        <begin position="240"/>
        <end position="527"/>
    </location>
</feature>
<feature type="disulfide bond" evidence="1">
    <location>
        <begin position="361"/>
        <end position="373"/>
    </location>
</feature>
<feature type="disulfide bond" evidence="1">
    <location>
        <begin position="412"/>
        <end position="419"/>
    </location>
</feature>
<feature type="disulfide bond" evidence="1">
    <location>
        <begin position="509"/>
        <end position="528"/>
    </location>
</feature>
<feature type="disulfide bond" evidence="1">
    <location>
        <begin position="513"/>
        <end position="531"/>
    </location>
</feature>
<feature type="disulfide bond" evidence="1">
    <location>
        <begin position="534"/>
        <end position="546"/>
    </location>
</feature>
<feature type="disulfide bond" evidence="1">
    <location>
        <begin position="549"/>
        <end position="562"/>
    </location>
</feature>
<organism>
    <name type="scientific">Pongo abelii</name>
    <name type="common">Sumatran orangutan</name>
    <name type="synonym">Pongo pygmaeus abelii</name>
    <dbReference type="NCBI Taxonomy" id="9601"/>
    <lineage>
        <taxon>Eukaryota</taxon>
        <taxon>Metazoa</taxon>
        <taxon>Chordata</taxon>
        <taxon>Craniata</taxon>
        <taxon>Vertebrata</taxon>
        <taxon>Euteleostomi</taxon>
        <taxon>Mammalia</taxon>
        <taxon>Eutheria</taxon>
        <taxon>Euarchontoglires</taxon>
        <taxon>Primates</taxon>
        <taxon>Haplorrhini</taxon>
        <taxon>Catarrhini</taxon>
        <taxon>Hominidae</taxon>
        <taxon>Pongo</taxon>
    </lineage>
</organism>
<keyword id="KW-1003">Cell membrane</keyword>
<keyword id="KW-1015">Disulfide bond</keyword>
<keyword id="KW-0297">G-protein coupled receptor</keyword>
<keyword id="KW-0325">Glycoprotein</keyword>
<keyword id="KW-0472">Membrane</keyword>
<keyword id="KW-0675">Receptor</keyword>
<keyword id="KW-1185">Reference proteome</keyword>
<keyword id="KW-0732">Signal</keyword>
<keyword id="KW-0807">Transducer</keyword>
<keyword id="KW-0812">Transmembrane</keyword>
<keyword id="KW-1133">Transmembrane helix</keyword>
<proteinExistence type="evidence at transcript level"/>